<protein>
    <recommendedName>
        <fullName evidence="17">Small conductance calcium-activated potassium channel protein 3</fullName>
        <shortName>SK3</shortName>
        <shortName>SKCa 3</shortName>
        <shortName>SKCa3</shortName>
    </recommendedName>
    <alternativeName>
        <fullName>KCa2.3</fullName>
    </alternativeName>
</protein>
<sequence>MDTSGHFHDSGVGDLDEDPKCPCPSSGDEQQQQQQQQQQQQPPPPAPPAAPQQPLGPSLQPQPPQLQQQQQQQQQQQQQQPPHPLSQLAQLQSQPVHPGLLHSSPTAFRAPPSSNSTAILHPSSRQGSQLNLNDHLLGHSPSSTATSGPGGGSRHRQASPLVHRRDSNPFTEIAMSSCKYSGGVMKPLSRLSASRRNLIEAETEGQPLQLFSPSNPPEIVISSREDNHAHQTLLHHPNATHNHQHAGTTASSTTFPKANKRKNQNIGYKLGHRRALFEKRKRLSDYALIFGMFGIVVMVIETELSWGLYSKDSMFSLALKCLISLSTIILLGLIIAYHTREVQLFVIDNGADDWRIAMTYERILYISLEMLVCAIHPIPGEYKFFWTARLAFSYTPSRAEADVDIILSIPMFLRLYLIARVMLLHSKLFTDASSRSIGALNKINFNTRFVMKTLMTICPGTVLLVFSISLWIIAAWTVRVCERYHDQQDVTSNFLGAMWLISITFLSIGYGDMVPHTYCGKGVCLLTGIMGAGCTALVVAVVARKLELTKAEKHVHNFMMDTQLTKRIKNAAANVLRETWLIYKHTKLLKKIDHAKVRKHQRKFLQAIHQLRSVKMEQRKLSDQANTLVDLSKMQNVMYDLITELNDRSEDLEKQIGSLESKLEHLTASFNSLPLLIADTLRQQQQQLLSAIIEARGVSVAVGTTHTPISDSPIGVSSTSFPTPYTSSSSC</sequence>
<gene>
    <name evidence="19" type="primary">KCNN3</name>
    <name type="synonym">K3</name>
</gene>
<comment type="function">
    <text evidence="4 7 8 11 12">Small conductance calcium-activated potassium channel that mediates the voltage-independent transmembrane transfer of potassium across the cell membrane through a constitutive interaction with calmodulin which binds the intracellular calcium allowing its opening (PubMed:12808432, PubMed:20562108, PubMed:31155282, PubMed:36502918). The current is characterized by a voltage-independent activation, an intracellular calcium concentration increase-dependent activation and a single-channel conductance of 10 picosiemens (PubMed:12808432, PubMed:20562108, PubMed:31155282, PubMed:36502918). Also presents an inwardly rectifying current, thus reducing its already small outward conductance of potassium ions, which is particularly the case when the membrane potential displays positive values, above + 20 mV (PubMed:12808432). Activation is followed by membrane hyperpolarization. Thought to regulate neuronal excitability by contributing to the slow component of synaptic afterhyperpolarization (By similarity).</text>
</comment>
<comment type="function">
    <molecule>Isoform 3</molecule>
    <text evidence="7 18">Does not function as a small conductance calcium-activated potassium channel (Probable). Selectively suppresses endogenous KCNN3 currents, in a dominant-negative fashion by decreasing the abundance of functional channels in the plasma membrane, possibly by selectively coassembling with and sequestering native KCNN3 protein in intracellular compartments (PubMed:12808432). This dominant inhibitory effect extends to other members of the SK subfamily (PubMed:12808432).</text>
</comment>
<comment type="catalytic activity">
    <reaction evidence="7 8 11 12">
        <text>K(+)(in) = K(+)(out)</text>
        <dbReference type="Rhea" id="RHEA:29463"/>
        <dbReference type="ChEBI" id="CHEBI:29103"/>
    </reaction>
</comment>
<comment type="activity regulation">
    <text evidence="8 11">Inhibited by bee venom neurotoxin apamin.</text>
</comment>
<comment type="subunit">
    <text evidence="3 9 11 12">Homodimer (PubMed:20689065). Heteromultimer with KCNN2 or KCNN1; this modulates plasma membrane expression and consequently the small conductance calcium-activated potassium channel activity (PubMed:20689065, PubMed:36502918). The complex is composed of 4 channel subunits each of which binds to a calmodulin subunit which regulates the channel activity through calcium-binding (By similarity). Interacts with CALM1 (PubMed:31155282).</text>
</comment>
<comment type="interaction">
    <interactant intactId="EBI-17888181">
        <id>Q9UGI6-2</id>
    </interactant>
    <interactant intactId="EBI-4402346">
        <id>P51798</id>
        <label>CLCN7</label>
    </interactant>
    <organismsDiffer>false</organismsDiffer>
    <experiments>3</experiments>
</comment>
<comment type="interaction">
    <interactant intactId="EBI-17888181">
        <id>Q9UGI6-2</id>
    </interactant>
    <interactant intactId="EBI-489887">
        <id>P50402</id>
        <label>EMD</label>
    </interactant>
    <organismsDiffer>false</organismsDiffer>
    <experiments>3</experiments>
</comment>
<comment type="interaction">
    <interactant intactId="EBI-17888181">
        <id>Q9UGI6-2</id>
    </interactant>
    <interactant intactId="EBI-10976398">
        <id>Q7Z2K6</id>
        <label>ERMP1</label>
    </interactant>
    <organismsDiffer>false</organismsDiffer>
    <experiments>3</experiments>
</comment>
<comment type="interaction">
    <interactant intactId="EBI-17888181">
        <id>Q9UGI6-2</id>
    </interactant>
    <interactant intactId="EBI-3921185">
        <id>Q9H115</id>
        <label>NAPB</label>
    </interactant>
    <organismsDiffer>false</organismsDiffer>
    <experiments>3</experiments>
</comment>
<comment type="subcellular location">
    <subcellularLocation>
        <location evidence="7 12">Cell membrane</location>
        <topology evidence="5">Multi-pass membrane protein</topology>
    </subcellularLocation>
    <subcellularLocation>
        <location evidence="2">Cytoplasm</location>
        <location evidence="2">Myofibril</location>
        <location evidence="2">Sarcomere</location>
        <location evidence="2">Z line</location>
    </subcellularLocation>
</comment>
<comment type="alternative products">
    <event type="alternative splicing"/>
    <isoform>
        <id>Q9UGI6-1</id>
        <name>1</name>
        <sequence type="displayed"/>
    </isoform>
    <isoform>
        <id>Q9UGI6-2</id>
        <name>2</name>
        <sequence type="described" ref="VSP_039461 VSP_039462"/>
    </isoform>
    <isoform>
        <id>Q9UGI6-3</id>
        <name>3</name>
        <name>SK3-1B</name>
        <sequence type="described" ref="VSP_047641"/>
    </isoform>
</comment>
<comment type="tissue specificity">
    <molecule>Isoform 3</molecule>
    <text evidence="7">Widely distributed in human tissues and is present at 20-60% of KCNN3 in the brain.</text>
</comment>
<comment type="domain">
    <text evidence="9">The coiled-coil domaim mediates heteromeic assembly.</text>
</comment>
<comment type="polymorphism">
    <text evidence="13">The second poly-Gln region of KCNN3 is highly polymorphic and the number of Gln varies from 12 to 28 in the population.</text>
</comment>
<comment type="disease" evidence="11">
    <disease id="DI-05702">
        <name>Zimmermann-Laband syndrome 3</name>
        <acronym>ZLS3</acronym>
        <description>A form of Zimmermann-Laband syndrome, a rare developmental disorder characterized by facial dysmorphism with bulbous nose and thick floppy ears, gingival enlargement, hypoplasia or aplasia of terminal phalanges and nails, hypertrichosis, joint hyperextensibility, and hepatosplenomegaly. Some patients manifest intellectual disability with or without epilepsy. ZLS3 inheritance is autosomal dominant.</description>
        <dbReference type="MIM" id="618658"/>
    </disease>
    <text>The disease is caused by variants affecting the gene represented in this entry.</text>
</comment>
<comment type="similarity">
    <text evidence="17">Belongs to the potassium channel KCNN family. KCa2.3/KCNN3 subfamily.</text>
</comment>
<proteinExistence type="evidence at protein level"/>
<dbReference type="EMBL" id="AF031815">
    <property type="protein sequence ID" value="AAC26099.1"/>
    <property type="molecule type" value="mRNA"/>
</dbReference>
<dbReference type="EMBL" id="AJ251016">
    <property type="protein sequence ID" value="CAB61331.1"/>
    <property type="molecule type" value="mRNA"/>
</dbReference>
<dbReference type="EMBL" id="AF438203">
    <property type="protein sequence ID" value="AAL40801.1"/>
    <property type="molecule type" value="mRNA"/>
</dbReference>
<dbReference type="EMBL" id="AF336797">
    <property type="protein sequence ID" value="AAK15345.1"/>
    <property type="molecule type" value="Genomic_DNA"/>
</dbReference>
<dbReference type="EMBL" id="AY138900">
    <property type="protein sequence ID" value="AAN46636.1"/>
    <property type="molecule type" value="mRNA"/>
</dbReference>
<dbReference type="EMBL" id="AL390204">
    <property type="status" value="NOT_ANNOTATED_CDS"/>
    <property type="molecule type" value="Genomic_DNA"/>
</dbReference>
<dbReference type="EMBL" id="AL606500">
    <property type="status" value="NOT_ANNOTATED_CDS"/>
    <property type="molecule type" value="Genomic_DNA"/>
</dbReference>
<dbReference type="EMBL" id="AL954342">
    <property type="status" value="NOT_ANNOTATED_CDS"/>
    <property type="molecule type" value="Genomic_DNA"/>
</dbReference>
<dbReference type="EMBL" id="CH471121">
    <property type="protein sequence ID" value="EAW53180.1"/>
    <property type="molecule type" value="Genomic_DNA"/>
</dbReference>
<dbReference type="EMBL" id="CH471121">
    <property type="protein sequence ID" value="EAW53182.1"/>
    <property type="molecule type" value="Genomic_DNA"/>
</dbReference>
<dbReference type="EMBL" id="BC042147">
    <property type="protein sequence ID" value="AAH42147.1"/>
    <property type="molecule type" value="mRNA"/>
</dbReference>
<dbReference type="CCDS" id="CCDS1072.1">
    <molecule id="Q9UGI6-2"/>
</dbReference>
<dbReference type="CCDS" id="CCDS30880.1">
    <molecule id="Q9UGI6-1"/>
</dbReference>
<dbReference type="CCDS" id="CCDS91063.1">
    <molecule id="Q9UGI6-3"/>
</dbReference>
<dbReference type="RefSeq" id="NP_001191016.1">
    <property type="nucleotide sequence ID" value="NM_001204087.1"/>
</dbReference>
<dbReference type="RefSeq" id="NP_001352767.1">
    <molecule id="Q9UGI6-3"/>
    <property type="nucleotide sequence ID" value="NM_001365838.1"/>
</dbReference>
<dbReference type="RefSeq" id="NP_002240.3">
    <molecule id="Q9UGI6-1"/>
    <property type="nucleotide sequence ID" value="NM_002249.5"/>
</dbReference>
<dbReference type="RefSeq" id="NP_740752.1">
    <molecule id="Q9UGI6-2"/>
    <property type="nucleotide sequence ID" value="NM_170782.3"/>
</dbReference>
<dbReference type="SMR" id="Q9UGI6"/>
<dbReference type="BioGRID" id="109983">
    <property type="interactions" value="10"/>
</dbReference>
<dbReference type="FunCoup" id="Q9UGI6">
    <property type="interactions" value="298"/>
</dbReference>
<dbReference type="IntAct" id="Q9UGI6">
    <property type="interactions" value="4"/>
</dbReference>
<dbReference type="STRING" id="9606.ENSP00000481848"/>
<dbReference type="BindingDB" id="Q9UGI6"/>
<dbReference type="ChEMBL" id="CHEMBL3381"/>
<dbReference type="DrugBank" id="DB02587">
    <property type="generic name" value="Colforsin"/>
</dbReference>
<dbReference type="DrugBank" id="DB04209">
    <property type="generic name" value="Dequalinium"/>
</dbReference>
<dbReference type="DrugBank" id="DB01110">
    <property type="generic name" value="Miconazole"/>
</dbReference>
<dbReference type="DrugBank" id="DB01054">
    <property type="generic name" value="Nitrendipine"/>
</dbReference>
<dbReference type="DrugBank" id="DB00721">
    <property type="generic name" value="Procaine"/>
</dbReference>
<dbReference type="DrugBank" id="DB16733">
    <property type="generic name" value="Rimtuzalcap"/>
</dbReference>
<dbReference type="DrugBank" id="DB00867">
    <property type="generic name" value="Ritodrine"/>
</dbReference>
<dbReference type="DrugBank" id="DB08837">
    <property type="generic name" value="Tetraethylammonium"/>
</dbReference>
<dbReference type="DrugBank" id="DB09089">
    <property type="generic name" value="Trimebutine"/>
</dbReference>
<dbReference type="DrugCentral" id="Q9UGI6"/>
<dbReference type="GuidetoPHARMACOLOGY" id="383"/>
<dbReference type="TCDB" id="1.A.1.16.7">
    <property type="family name" value="the voltage-gated ion channel (vic) superfamily"/>
</dbReference>
<dbReference type="GlyGen" id="Q9UGI6">
    <property type="glycosylation" value="1 site, 1 O-linked glycan (1 site)"/>
</dbReference>
<dbReference type="iPTMnet" id="Q9UGI6"/>
<dbReference type="PhosphoSitePlus" id="Q9UGI6"/>
<dbReference type="BioMuta" id="KCNN3"/>
<dbReference type="DMDM" id="17367120"/>
<dbReference type="jPOST" id="Q9UGI6"/>
<dbReference type="MassIVE" id="Q9UGI6"/>
<dbReference type="PaxDb" id="9606-ENSP00000481848"/>
<dbReference type="PeptideAtlas" id="Q9UGI6"/>
<dbReference type="ProteomicsDB" id="70008"/>
<dbReference type="ProteomicsDB" id="84216">
    <molecule id="Q9UGI6-1"/>
</dbReference>
<dbReference type="ProteomicsDB" id="84217">
    <molecule id="Q9UGI6-2"/>
</dbReference>
<dbReference type="Antibodypedia" id="20402">
    <property type="antibodies" value="185 antibodies from 28 providers"/>
</dbReference>
<dbReference type="DNASU" id="3782"/>
<dbReference type="Ensembl" id="ENST00000271915.9">
    <molecule id="Q9UGI6-1"/>
    <property type="protein sequence ID" value="ENSP00000271915.3"/>
    <property type="gene ID" value="ENSG00000143603.19"/>
</dbReference>
<dbReference type="Ensembl" id="ENST00000358505.2">
    <molecule id="Q9UGI6-3"/>
    <property type="protein sequence ID" value="ENSP00000351295.2"/>
    <property type="gene ID" value="ENSG00000143603.19"/>
</dbReference>
<dbReference type="Ensembl" id="ENST00000361147.8">
    <molecule id="Q9UGI6-2"/>
    <property type="protein sequence ID" value="ENSP00000354764.4"/>
    <property type="gene ID" value="ENSG00000143603.19"/>
</dbReference>
<dbReference type="GeneID" id="3782"/>
<dbReference type="KEGG" id="hsa:3782"/>
<dbReference type="MANE-Select" id="ENST00000271915.9">
    <property type="protein sequence ID" value="ENSP00000271915.3"/>
    <property type="RefSeq nucleotide sequence ID" value="NM_002249.6"/>
    <property type="RefSeq protein sequence ID" value="NP_002240.3"/>
</dbReference>
<dbReference type="UCSC" id="uc001ffo.4">
    <molecule id="Q9UGI6-1"/>
    <property type="organism name" value="human"/>
</dbReference>
<dbReference type="AGR" id="HGNC:6292"/>
<dbReference type="CTD" id="3782"/>
<dbReference type="DisGeNET" id="3782"/>
<dbReference type="GeneCards" id="KCNN3"/>
<dbReference type="HGNC" id="HGNC:6292">
    <property type="gene designation" value="KCNN3"/>
</dbReference>
<dbReference type="HPA" id="ENSG00000143603">
    <property type="expression patterns" value="Tissue enhanced (brain)"/>
</dbReference>
<dbReference type="MalaCards" id="KCNN3"/>
<dbReference type="MIM" id="602983">
    <property type="type" value="gene"/>
</dbReference>
<dbReference type="MIM" id="618658">
    <property type="type" value="phenotype"/>
</dbReference>
<dbReference type="neXtProt" id="NX_Q9UGI6"/>
<dbReference type="OpenTargets" id="ENSG00000143603"/>
<dbReference type="Orphanet" id="3473">
    <property type="disease" value="Zimmermann-Laband syndrome"/>
</dbReference>
<dbReference type="PharmGKB" id="PA30072"/>
<dbReference type="VEuPathDB" id="HostDB:ENSG00000143603"/>
<dbReference type="eggNOG" id="KOG3684">
    <property type="taxonomic scope" value="Eukaryota"/>
</dbReference>
<dbReference type="GeneTree" id="ENSGT00950000182904"/>
<dbReference type="HOGENOM" id="CLU_014617_5_0_1"/>
<dbReference type="InParanoid" id="Q9UGI6"/>
<dbReference type="OrthoDB" id="73653at2759"/>
<dbReference type="PAN-GO" id="Q9UGI6">
    <property type="GO annotations" value="6 GO annotations based on evolutionary models"/>
</dbReference>
<dbReference type="PhylomeDB" id="Q9UGI6"/>
<dbReference type="TreeFam" id="TF315015"/>
<dbReference type="PathwayCommons" id="Q9UGI6"/>
<dbReference type="Reactome" id="R-HSA-1296052">
    <property type="pathway name" value="Ca2+ activated K+ channels"/>
</dbReference>
<dbReference type="SignaLink" id="Q9UGI6"/>
<dbReference type="SIGNOR" id="Q9UGI6"/>
<dbReference type="BioGRID-ORCS" id="3782">
    <property type="hits" value="12 hits in 1152 CRISPR screens"/>
</dbReference>
<dbReference type="ChiTaRS" id="KCNN3">
    <property type="organism name" value="human"/>
</dbReference>
<dbReference type="GeneWiki" id="SK3"/>
<dbReference type="GenomeRNAi" id="3782"/>
<dbReference type="Pharos" id="Q9UGI6">
    <property type="development level" value="Tchem"/>
</dbReference>
<dbReference type="PRO" id="PR:Q9UGI6"/>
<dbReference type="Proteomes" id="UP000005640">
    <property type="component" value="Chromosome 1"/>
</dbReference>
<dbReference type="RNAct" id="Q9UGI6">
    <property type="molecule type" value="protein"/>
</dbReference>
<dbReference type="Bgee" id="ENSG00000143603">
    <property type="expression patterns" value="Expressed in lateral globus pallidus and 171 other cell types or tissues"/>
</dbReference>
<dbReference type="ExpressionAtlas" id="Q9UGI6">
    <property type="expression patterns" value="baseline and differential"/>
</dbReference>
<dbReference type="GO" id="GO:0043005">
    <property type="term" value="C:neuron projection"/>
    <property type="evidence" value="ECO:0000318"/>
    <property type="project" value="GO_Central"/>
</dbReference>
<dbReference type="GO" id="GO:0043025">
    <property type="term" value="C:neuronal cell body"/>
    <property type="evidence" value="ECO:0000318"/>
    <property type="project" value="GO_Central"/>
</dbReference>
<dbReference type="GO" id="GO:0005886">
    <property type="term" value="C:plasma membrane"/>
    <property type="evidence" value="ECO:0000318"/>
    <property type="project" value="GO_Central"/>
</dbReference>
<dbReference type="GO" id="GO:0030018">
    <property type="term" value="C:Z disc"/>
    <property type="evidence" value="ECO:0007669"/>
    <property type="project" value="UniProtKB-SubCell"/>
</dbReference>
<dbReference type="GO" id="GO:0005516">
    <property type="term" value="F:calmodulin binding"/>
    <property type="evidence" value="ECO:0000314"/>
    <property type="project" value="UniProtKB"/>
</dbReference>
<dbReference type="GO" id="GO:0005242">
    <property type="term" value="F:inward rectifier potassium channel activity"/>
    <property type="evidence" value="ECO:0000314"/>
    <property type="project" value="UniProtKB"/>
</dbReference>
<dbReference type="GO" id="GO:0016286">
    <property type="term" value="F:small conductance calcium-activated potassium channel activity"/>
    <property type="evidence" value="ECO:0000314"/>
    <property type="project" value="UniProtKB"/>
</dbReference>
<dbReference type="GO" id="GO:0071805">
    <property type="term" value="P:potassium ion transmembrane transport"/>
    <property type="evidence" value="ECO:0000314"/>
    <property type="project" value="UniProtKB"/>
</dbReference>
<dbReference type="FunFam" id="1.10.287.70:FF:000022">
    <property type="entry name" value="Small conductance calcium-activated potassium channel, isoform O"/>
    <property type="match status" value="1"/>
</dbReference>
<dbReference type="FunFam" id="1.10.287.70:FF:000027">
    <property type="entry name" value="Small conductance calcium-activated potassium channel, isoform O"/>
    <property type="match status" value="1"/>
</dbReference>
<dbReference type="Gene3D" id="1.10.287.70">
    <property type="match status" value="2"/>
</dbReference>
<dbReference type="InterPro" id="IPR004178">
    <property type="entry name" value="CaM-bd_dom"/>
</dbReference>
<dbReference type="InterPro" id="IPR036122">
    <property type="entry name" value="CaM-bd_dom_sf"/>
</dbReference>
<dbReference type="InterPro" id="IPR015449">
    <property type="entry name" value="K_chnl_Ca-activ_SK"/>
</dbReference>
<dbReference type="InterPro" id="IPR013099">
    <property type="entry name" value="K_chnl_dom"/>
</dbReference>
<dbReference type="PANTHER" id="PTHR10153">
    <property type="entry name" value="SMALL CONDUCTANCE CALCIUM-ACTIVATED POTASSIUM CHANNEL"/>
    <property type="match status" value="1"/>
</dbReference>
<dbReference type="Pfam" id="PF02888">
    <property type="entry name" value="CaMBD"/>
    <property type="match status" value="1"/>
</dbReference>
<dbReference type="Pfam" id="PF07885">
    <property type="entry name" value="Ion_trans_2"/>
    <property type="match status" value="1"/>
</dbReference>
<dbReference type="Pfam" id="PF03530">
    <property type="entry name" value="SK_channel"/>
    <property type="match status" value="1"/>
</dbReference>
<dbReference type="PRINTS" id="PR01451">
    <property type="entry name" value="SKCHANNEL"/>
</dbReference>
<dbReference type="SMART" id="SM01053">
    <property type="entry name" value="CaMBD"/>
    <property type="match status" value="1"/>
</dbReference>
<dbReference type="SUPFAM" id="SSF81327">
    <property type="entry name" value="Small-conductance potassium channel"/>
    <property type="match status" value="1"/>
</dbReference>
<dbReference type="SUPFAM" id="SSF81324">
    <property type="entry name" value="Voltage-gated potassium channels"/>
    <property type="match status" value="1"/>
</dbReference>
<accession>Q9UGI6</accession>
<accession>B1ANX0</accession>
<accession>O43517</accession>
<accession>Q86VF9</accession>
<accession>Q8WXG7</accession>
<evidence type="ECO:0000250" key="1"/>
<evidence type="ECO:0000250" key="2">
    <source>
        <dbReference type="UniProtKB" id="P58391"/>
    </source>
</evidence>
<evidence type="ECO:0000250" key="3">
    <source>
        <dbReference type="UniProtKB" id="P70604"/>
    </source>
</evidence>
<evidence type="ECO:0000250" key="4">
    <source>
        <dbReference type="UniProtKB" id="P70605"/>
    </source>
</evidence>
<evidence type="ECO:0000255" key="5"/>
<evidence type="ECO:0000256" key="6">
    <source>
        <dbReference type="SAM" id="MobiDB-lite"/>
    </source>
</evidence>
<evidence type="ECO:0000269" key="7">
    <source>
    </source>
</evidence>
<evidence type="ECO:0000269" key="8">
    <source>
    </source>
</evidence>
<evidence type="ECO:0000269" key="9">
    <source>
    </source>
</evidence>
<evidence type="ECO:0000269" key="10">
    <source>
    </source>
</evidence>
<evidence type="ECO:0000269" key="11">
    <source>
    </source>
</evidence>
<evidence type="ECO:0000269" key="12">
    <source>
    </source>
</evidence>
<evidence type="ECO:0000269" key="13">
    <source>
    </source>
</evidence>
<evidence type="ECO:0000303" key="14">
    <source>
    </source>
</evidence>
<evidence type="ECO:0000303" key="15">
    <source>
    </source>
</evidence>
<evidence type="ECO:0000303" key="16">
    <source ref="3"/>
</evidence>
<evidence type="ECO:0000305" key="17"/>
<evidence type="ECO:0000305" key="18">
    <source>
    </source>
</evidence>
<evidence type="ECO:0000312" key="19">
    <source>
        <dbReference type="HGNC" id="HGNC:6292"/>
    </source>
</evidence>
<reference key="1">
    <citation type="journal article" date="1998" name="Mol. Psychiatry">
        <title>Isolation of a novel potassium channel gene hSKCa3 containing a polymorphic CAG repeat: a candidate for schizophrenia and bipolar disorder?</title>
        <authorList>
            <person name="Chandy K.G."/>
            <person name="Fantino E."/>
            <person name="Wittekindt O."/>
            <person name="Kalman K."/>
            <person name="Tong L.-L."/>
            <person name="Ho T.-H."/>
            <person name="Gutman G.A."/>
            <person name="Crocq M.-A."/>
            <person name="Ganguli R."/>
            <person name="Nimgaonkar V."/>
            <person name="Morris-Rosendahl D.J."/>
            <person name="Gargus J.J."/>
        </authorList>
    </citation>
    <scope>NUCLEOTIDE SEQUENCE [MRNA] (ISOFORM 1)</scope>
    <scope>POLYMORPHISM OF POLY-GLN REGION</scope>
</reference>
<reference key="2">
    <citation type="submission" date="1999-11" db="EMBL/GenBank/DDBJ databases">
        <authorList>
            <person name="Terstappen G.C."/>
            <person name="Pula G."/>
            <person name="Chen M.X."/>
            <person name="Roncarati R."/>
        </authorList>
    </citation>
    <scope>NUCLEOTIDE SEQUENCE [MRNA] (ISOFORM 1)</scope>
    <scope>VARIANT GLN-GLN-GLN-GLN-GLN-80 INS</scope>
</reference>
<reference key="3">
    <citation type="journal article" date="2001" name="Am. J. Hum. Genet.">
        <title>Splice variants of small conductance calcium-activated potassium channel gene, KCNN3/ SKCa3 cause dominant-negative suppression of SKCa currents.</title>
        <authorList>
            <person name="Tomita H."/>
            <person name="Shakkottai V."/>
            <person name="Wulff H."/>
            <person name="Sun G."/>
            <person name="Potkin S.G."/>
            <person name="Bunney W.E."/>
            <person name="Chandy G.K."/>
            <person name="Gargus J.J."/>
        </authorList>
    </citation>
    <scope>NUCLEOTIDE SEQUENCE [MRNA] (ISOFORM 2)</scope>
</reference>
<reference key="4">
    <citation type="journal article" date="2001" name="J. Hum. Genet.">
        <title>Genomic organization and promoter analysis of human KCNN3 gene.</title>
        <authorList>
            <person name="Sun G."/>
            <person name="Tomita H."/>
            <person name="Shakkottai V.G."/>
            <person name="Gargus J.J."/>
        </authorList>
    </citation>
    <scope>NUCLEOTIDE SEQUENCE [GENOMIC DNA / MRNA] (ISOFORM 1)</scope>
    <scope>VARIANT GLN-GLN-GLN-GLN-GLN-80 INS</scope>
</reference>
<reference key="5">
    <citation type="journal article" date="2003" name="Mol. Psychiatry">
        <title>Novel truncated isoform of SK3 potassium channel is a potent dominant-negative regulator of SK currents: implications in schizophrenia.</title>
        <authorList>
            <person name="Tomita H."/>
            <person name="Shakkottai V.G."/>
            <person name="Gutman G.A."/>
            <person name="Sun G."/>
            <person name="Bunney W.E."/>
            <person name="Cahalan M.D."/>
            <person name="Chandy K.G."/>
            <person name="Gargus J.J."/>
        </authorList>
    </citation>
    <scope>NUCLEOTIDE SEQUENCE [MRNA] (ISOFORM 3)</scope>
    <scope>FUNCTION</scope>
    <scope>TRANSPORTER ACTIVITY</scope>
    <scope>SUBCELLULAR LOCATION</scope>
</reference>
<reference key="6">
    <citation type="journal article" date="2006" name="Nature">
        <title>The DNA sequence and biological annotation of human chromosome 1.</title>
        <authorList>
            <person name="Gregory S.G."/>
            <person name="Barlow K.F."/>
            <person name="McLay K.E."/>
            <person name="Kaul R."/>
            <person name="Swarbreck D."/>
            <person name="Dunham A."/>
            <person name="Scott C.E."/>
            <person name="Howe K.L."/>
            <person name="Woodfine K."/>
            <person name="Spencer C.C.A."/>
            <person name="Jones M.C."/>
            <person name="Gillson C."/>
            <person name="Searle S."/>
            <person name="Zhou Y."/>
            <person name="Kokocinski F."/>
            <person name="McDonald L."/>
            <person name="Evans R."/>
            <person name="Phillips K."/>
            <person name="Atkinson A."/>
            <person name="Cooper R."/>
            <person name="Jones C."/>
            <person name="Hall R.E."/>
            <person name="Andrews T.D."/>
            <person name="Lloyd C."/>
            <person name="Ainscough R."/>
            <person name="Almeida J.P."/>
            <person name="Ambrose K.D."/>
            <person name="Anderson F."/>
            <person name="Andrew R.W."/>
            <person name="Ashwell R.I.S."/>
            <person name="Aubin K."/>
            <person name="Babbage A.K."/>
            <person name="Bagguley C.L."/>
            <person name="Bailey J."/>
            <person name="Beasley H."/>
            <person name="Bethel G."/>
            <person name="Bird C.P."/>
            <person name="Bray-Allen S."/>
            <person name="Brown J.Y."/>
            <person name="Brown A.J."/>
            <person name="Buckley D."/>
            <person name="Burton J."/>
            <person name="Bye J."/>
            <person name="Carder C."/>
            <person name="Chapman J.C."/>
            <person name="Clark S.Y."/>
            <person name="Clarke G."/>
            <person name="Clee C."/>
            <person name="Cobley V."/>
            <person name="Collier R.E."/>
            <person name="Corby N."/>
            <person name="Coville G.J."/>
            <person name="Davies J."/>
            <person name="Deadman R."/>
            <person name="Dunn M."/>
            <person name="Earthrowl M."/>
            <person name="Ellington A.G."/>
            <person name="Errington H."/>
            <person name="Frankish A."/>
            <person name="Frankland J."/>
            <person name="French L."/>
            <person name="Garner P."/>
            <person name="Garnett J."/>
            <person name="Gay L."/>
            <person name="Ghori M.R.J."/>
            <person name="Gibson R."/>
            <person name="Gilby L.M."/>
            <person name="Gillett W."/>
            <person name="Glithero R.J."/>
            <person name="Grafham D.V."/>
            <person name="Griffiths C."/>
            <person name="Griffiths-Jones S."/>
            <person name="Grocock R."/>
            <person name="Hammond S."/>
            <person name="Harrison E.S.I."/>
            <person name="Hart E."/>
            <person name="Haugen E."/>
            <person name="Heath P.D."/>
            <person name="Holmes S."/>
            <person name="Holt K."/>
            <person name="Howden P.J."/>
            <person name="Hunt A.R."/>
            <person name="Hunt S.E."/>
            <person name="Hunter G."/>
            <person name="Isherwood J."/>
            <person name="James R."/>
            <person name="Johnson C."/>
            <person name="Johnson D."/>
            <person name="Joy A."/>
            <person name="Kay M."/>
            <person name="Kershaw J.K."/>
            <person name="Kibukawa M."/>
            <person name="Kimberley A.M."/>
            <person name="King A."/>
            <person name="Knights A.J."/>
            <person name="Lad H."/>
            <person name="Laird G."/>
            <person name="Lawlor S."/>
            <person name="Leongamornlert D.A."/>
            <person name="Lloyd D.M."/>
            <person name="Loveland J."/>
            <person name="Lovell J."/>
            <person name="Lush M.J."/>
            <person name="Lyne R."/>
            <person name="Martin S."/>
            <person name="Mashreghi-Mohammadi M."/>
            <person name="Matthews L."/>
            <person name="Matthews N.S.W."/>
            <person name="McLaren S."/>
            <person name="Milne S."/>
            <person name="Mistry S."/>
            <person name="Moore M.J.F."/>
            <person name="Nickerson T."/>
            <person name="O'Dell C.N."/>
            <person name="Oliver K."/>
            <person name="Palmeiri A."/>
            <person name="Palmer S.A."/>
            <person name="Parker A."/>
            <person name="Patel D."/>
            <person name="Pearce A.V."/>
            <person name="Peck A.I."/>
            <person name="Pelan S."/>
            <person name="Phelps K."/>
            <person name="Phillimore B.J."/>
            <person name="Plumb R."/>
            <person name="Rajan J."/>
            <person name="Raymond C."/>
            <person name="Rouse G."/>
            <person name="Saenphimmachak C."/>
            <person name="Sehra H.K."/>
            <person name="Sheridan E."/>
            <person name="Shownkeen R."/>
            <person name="Sims S."/>
            <person name="Skuce C.D."/>
            <person name="Smith M."/>
            <person name="Steward C."/>
            <person name="Subramanian S."/>
            <person name="Sycamore N."/>
            <person name="Tracey A."/>
            <person name="Tromans A."/>
            <person name="Van Helmond Z."/>
            <person name="Wall M."/>
            <person name="Wallis J.M."/>
            <person name="White S."/>
            <person name="Whitehead S.L."/>
            <person name="Wilkinson J.E."/>
            <person name="Willey D.L."/>
            <person name="Williams H."/>
            <person name="Wilming L."/>
            <person name="Wray P.W."/>
            <person name="Wu Z."/>
            <person name="Coulson A."/>
            <person name="Vaudin M."/>
            <person name="Sulston J.E."/>
            <person name="Durbin R.M."/>
            <person name="Hubbard T."/>
            <person name="Wooster R."/>
            <person name="Dunham I."/>
            <person name="Carter N.P."/>
            <person name="McVean G."/>
            <person name="Ross M.T."/>
            <person name="Harrow J."/>
            <person name="Olson M.V."/>
            <person name="Beck S."/>
            <person name="Rogers J."/>
            <person name="Bentley D.R."/>
        </authorList>
    </citation>
    <scope>NUCLEOTIDE SEQUENCE [LARGE SCALE GENOMIC DNA]</scope>
</reference>
<reference key="7">
    <citation type="submission" date="2005-09" db="EMBL/GenBank/DDBJ databases">
        <authorList>
            <person name="Mural R.J."/>
            <person name="Istrail S."/>
            <person name="Sutton G.G."/>
            <person name="Florea L."/>
            <person name="Halpern A.L."/>
            <person name="Mobarry C.M."/>
            <person name="Lippert R."/>
            <person name="Walenz B."/>
            <person name="Shatkay H."/>
            <person name="Dew I."/>
            <person name="Miller J.R."/>
            <person name="Flanigan M.J."/>
            <person name="Edwards N.J."/>
            <person name="Bolanos R."/>
            <person name="Fasulo D."/>
            <person name="Halldorsson B.V."/>
            <person name="Hannenhalli S."/>
            <person name="Turner R."/>
            <person name="Yooseph S."/>
            <person name="Lu F."/>
            <person name="Nusskern D.R."/>
            <person name="Shue B.C."/>
            <person name="Zheng X.H."/>
            <person name="Zhong F."/>
            <person name="Delcher A.L."/>
            <person name="Huson D.H."/>
            <person name="Kravitz S.A."/>
            <person name="Mouchard L."/>
            <person name="Reinert K."/>
            <person name="Remington K.A."/>
            <person name="Clark A.G."/>
            <person name="Waterman M.S."/>
            <person name="Eichler E.E."/>
            <person name="Adams M.D."/>
            <person name="Hunkapiller M.W."/>
            <person name="Myers E.W."/>
            <person name="Venter J.C."/>
        </authorList>
    </citation>
    <scope>NUCLEOTIDE SEQUENCE [LARGE SCALE GENOMIC DNA]</scope>
</reference>
<reference key="8">
    <citation type="journal article" date="2004" name="Genome Res.">
        <title>The status, quality, and expansion of the NIH full-length cDNA project: the Mammalian Gene Collection (MGC).</title>
        <authorList>
            <consortium name="The MGC Project Team"/>
        </authorList>
    </citation>
    <scope>NUCLEOTIDE SEQUENCE [LARGE SCALE MRNA] (ISOFORM 2)</scope>
    <source>
        <tissue>Lymph</tissue>
    </source>
</reference>
<reference key="9">
    <citation type="journal article" date="2010" name="Circ. Res.">
        <title>Cardiac small conductance Ca2+-activated K+ channel subunits form heteromultimers via the coiled-coil domains in the C termini of the channels.</title>
        <authorList>
            <person name="Tuteja D."/>
            <person name="Rafizadeh S."/>
            <person name="Timofeyev V."/>
            <person name="Wang S."/>
            <person name="Zhang Z."/>
            <person name="Li N."/>
            <person name="Mateo R.K."/>
            <person name="Singapuri A."/>
            <person name="Young J.N."/>
            <person name="Knowlton A.A."/>
            <person name="Chiamvimonvat N."/>
        </authorList>
    </citation>
    <scope>SUBUNIT</scope>
    <scope>DOMAIN</scope>
    <scope>MUTAGENESIS OF 509-GLY--GLY-511</scope>
</reference>
<reference key="10">
    <citation type="journal article" date="2010" name="J. Biol. Chem.">
        <title>Allosteric block of KCa2 channels by apamin.</title>
        <authorList>
            <person name="Lamy C."/>
            <person name="Goodchild S.J."/>
            <person name="Weatherall K.L."/>
            <person name="Jane D.E."/>
            <person name="Liegeois J.F."/>
            <person name="Seutin V."/>
            <person name="Marrion N.V."/>
        </authorList>
    </citation>
    <scope>FUNCTION</scope>
    <scope>TRANSPORTER ACTIVITY</scope>
    <scope>ACTIVITY REGULATION</scope>
    <scope>MUTAGENESIS OF HIS-485 AND HIS-516</scope>
</reference>
<reference key="11">
    <citation type="journal article" date="2019" name="Am. J. Hum. Genet.">
        <title>Gain-of-function mutations in KCNN3 encoding the small-conductance Ca2+-activated K+ channel SK3 cause Zimmermann-Laband syndrome.</title>
        <authorList>
            <person name="Bauer C.K."/>
            <person name="Schneeberger P.E."/>
            <person name="Kortuem F."/>
            <person name="Altmueller J."/>
            <person name="Santos-Simarro F."/>
            <person name="Baker L."/>
            <person name="Keller-Ramey J."/>
            <person name="White S.M."/>
            <person name="Campeau P.M."/>
            <person name="Gripp K.W."/>
            <person name="Kutsche K."/>
        </authorList>
    </citation>
    <scope>FUNCTION</scope>
    <scope>TRANSPORTER ACTIVITY</scope>
    <scope>ACTIVITY REGULATION</scope>
    <scope>INTERACTION WITH CALM1</scope>
    <scope>INVOLVEMENT IN ZLS3</scope>
    <scope>VARIANTS ZLS3 GLU-269; ASP-350 AND CYS-436</scope>
    <scope>CHARACTERIZATION OF VARIANTS ZLS3 GLU-269; ASP-350 AND CYS-436</scope>
    <scope>CHARACTERIZATION OF VARIANT LEU-450</scope>
</reference>
<reference key="12">
    <citation type="journal article" date="2023" name="J. Biol. Chem.">
        <title>Preferential formation of human heteromeric SK2:SK3 channels limits homomeric SK channel assembly and function.</title>
        <authorList>
            <person name="Butler A.S."/>
            <person name="Hancox J.C."/>
            <person name="Marrion N.V."/>
        </authorList>
    </citation>
    <scope>FUNCTION</scope>
    <scope>TRANSPORTER ACTIVITY</scope>
    <scope>SUBUNIT</scope>
    <scope>SUBCELLULAR LOCATION</scope>
    <scope>MUTAGENESIS OF HIS-485</scope>
</reference>
<reference key="13">
    <citation type="journal article" date="2016" name="J. Hepatol.">
        <title>A de novo mutation in KCNN3 associated with autosomal dominant idiopathic non-cirrhotic portal hypertension.</title>
        <authorList>
            <person name="Koot B.G."/>
            <person name="Alders M."/>
            <person name="Verheij J."/>
            <person name="Beuers U."/>
            <person name="Cobben J.M."/>
        </authorList>
    </citation>
    <scope>VARIANT LEU-450</scope>
</reference>
<feature type="chain" id="PRO_0000155013" description="Small conductance calcium-activated potassium channel protein 3">
    <location>
        <begin position="1"/>
        <end position="731"/>
    </location>
</feature>
<feature type="transmembrane region" description="Helical; Name=Segment S1" evidence="5">
    <location>
        <begin position="288"/>
        <end position="308"/>
    </location>
</feature>
<feature type="transmembrane region" description="Helical; Name=Segment S2" evidence="5">
    <location>
        <begin position="315"/>
        <end position="335"/>
    </location>
</feature>
<feature type="transmembrane region" description="Helical; Name=Segment S3" evidence="5">
    <location>
        <begin position="366"/>
        <end position="386"/>
    </location>
</feature>
<feature type="transmembrane region" description="Helical; Name=Segment S4" evidence="5">
    <location>
        <begin position="405"/>
        <end position="425"/>
    </location>
</feature>
<feature type="transmembrane region" description="Helical; Name=Segment S5" evidence="5">
    <location>
        <begin position="454"/>
        <end position="474"/>
    </location>
</feature>
<feature type="intramembrane region" description="Pore-forming; Name=Segment H5" evidence="5">
    <location>
        <begin position="494"/>
        <end position="514"/>
    </location>
</feature>
<feature type="transmembrane region" description="Helical; Name=Segment S6" evidence="5">
    <location>
        <begin position="523"/>
        <end position="543"/>
    </location>
</feature>
<feature type="region of interest" description="Disordered" evidence="6">
    <location>
        <begin position="1"/>
        <end position="170"/>
    </location>
</feature>
<feature type="region of interest" description="Disordered" evidence="6">
    <location>
        <begin position="239"/>
        <end position="258"/>
    </location>
</feature>
<feature type="region of interest" description="Calmodulin-binding" evidence="1">
    <location>
        <begin position="561"/>
        <end position="637"/>
    </location>
</feature>
<feature type="region of interest" description="Disordered" evidence="6">
    <location>
        <begin position="709"/>
        <end position="731"/>
    </location>
</feature>
<feature type="coiled-coil region" evidence="5">
    <location>
        <begin position="642"/>
        <end position="669"/>
    </location>
</feature>
<feature type="compositionally biased region" description="Basic and acidic residues" evidence="6">
    <location>
        <begin position="1"/>
        <end position="11"/>
    </location>
</feature>
<feature type="compositionally biased region" description="Low complexity" evidence="6">
    <location>
        <begin position="30"/>
        <end position="40"/>
    </location>
</feature>
<feature type="compositionally biased region" description="Pro residues" evidence="6">
    <location>
        <begin position="41"/>
        <end position="51"/>
    </location>
</feature>
<feature type="compositionally biased region" description="Low complexity" evidence="6">
    <location>
        <begin position="52"/>
        <end position="95"/>
    </location>
</feature>
<feature type="compositionally biased region" description="Polar residues" evidence="6">
    <location>
        <begin position="112"/>
        <end position="132"/>
    </location>
</feature>
<feature type="compositionally biased region" description="Low complexity" evidence="6">
    <location>
        <begin position="138"/>
        <end position="147"/>
    </location>
</feature>
<feature type="compositionally biased region" description="Polar residues" evidence="6">
    <location>
        <begin position="239"/>
        <end position="256"/>
    </location>
</feature>
<feature type="compositionally biased region" description="Low complexity" evidence="6">
    <location>
        <begin position="717"/>
        <end position="731"/>
    </location>
</feature>
<feature type="modified residue" description="Phosphoserine" evidence="2">
    <location>
        <position position="167"/>
    </location>
</feature>
<feature type="splice variant" id="VSP_047641" description="In isoform 3." evidence="14">
    <location>
        <begin position="1"/>
        <end position="313"/>
    </location>
</feature>
<feature type="splice variant" id="VSP_039461" description="In isoform 2." evidence="15 16">
    <location>
        <begin position="1"/>
        <end position="305"/>
    </location>
</feature>
<feature type="splice variant" id="VSP_039462" description="In isoform 2." evidence="15 16">
    <original>WGLYS</original>
    <variation>MERPI</variation>
    <location>
        <begin position="306"/>
        <end position="310"/>
    </location>
</feature>
<feature type="sequence variant" id="VAR_081088">
    <original>Q</original>
    <variation>QQQQQQ</variation>
    <location>
        <position position="80"/>
    </location>
</feature>
<feature type="sequence variant" id="VAR_083434" description="In ZLS3; gain-of-function variant leading to increased channel sensitivity to calcium and faster channel activation; does not affect interaction with CALM1; dbSNP:rs1571353663." evidence="11">
    <original>K</original>
    <variation>E</variation>
    <location>
        <position position="269"/>
    </location>
</feature>
<feature type="sequence variant" id="VAR_083435" description="In ZLS3; gain-of-function variant leading to increased channel sensitivity to calcium and faster channel activation; does not affect interaction with CALM1; dbSNP:rs1571260285." evidence="11">
    <original>G</original>
    <variation>D</variation>
    <location>
        <position position="350"/>
    </location>
</feature>
<feature type="sequence variant" id="VAR_083436" description="In ZLS3; gain-of-function variant leading to increased channel sensitivity to calcium and faster channel activation; does not affect interaction with CALM1; dbSNP:rs1571259807." evidence="11">
    <original>S</original>
    <variation>C</variation>
    <location>
        <position position="436"/>
    </location>
</feature>
<feature type="sequence variant" id="VAR_083437" description="Found in a family with non-cirrhotic portal hypertension; uncertain significance; gain-of-function variant leading to constitutive activity with very low calcium levels; does not affect interaction with CALM1." evidence="10 11">
    <original>V</original>
    <variation>L</variation>
    <location>
        <position position="450"/>
    </location>
</feature>
<feature type="mutagenesis site" description="Reduced inhibition by apamin. Does not affect small conductance calcium-activated potassium channel activity." evidence="8 12">
    <original>H</original>
    <variation>N</variation>
    <location>
        <position position="485"/>
    </location>
</feature>
<feature type="mutagenesis site" description="Impairs small conductance calcium-activated potassium channel activity of KCNN2." evidence="9">
    <original>GYG</original>
    <variation>AAA</variation>
    <location>
        <begin position="509"/>
        <end position="511"/>
    </location>
</feature>
<feature type="mutagenesis site" description="No effect on inhibition by apamin." evidence="8">
    <original>H</original>
    <variation>N</variation>
    <location>
        <position position="516"/>
    </location>
</feature>
<feature type="sequence conflict" description="In Ref. 1; AAC26099." evidence="17" ref="1">
    <original>T</original>
    <variation>A</variation>
    <location>
        <position position="249"/>
    </location>
</feature>
<feature type="sequence conflict" description="In Ref. 1; AAC26099." evidence="17" ref="1">
    <original>L</original>
    <variation>P</variation>
    <location>
        <position position="276"/>
    </location>
</feature>
<feature type="sequence conflict" description="In Ref. 1; AAC26099." evidence="17" ref="1">
    <original>V</original>
    <variation>A</variation>
    <location>
        <position position="342"/>
    </location>
</feature>
<feature type="sequence conflict" description="In Ref. 1; AAC26099." evidence="17" ref="1">
    <original>V</original>
    <variation>A</variation>
    <location>
        <position position="480"/>
    </location>
</feature>
<name>KCNN3_HUMAN</name>
<keyword id="KW-0025">Alternative splicing</keyword>
<keyword id="KW-0112">Calmodulin-binding</keyword>
<keyword id="KW-1003">Cell membrane</keyword>
<keyword id="KW-0175">Coiled coil</keyword>
<keyword id="KW-0963">Cytoplasm</keyword>
<keyword id="KW-0225">Disease variant</keyword>
<keyword id="KW-0407">Ion channel</keyword>
<keyword id="KW-0406">Ion transport</keyword>
<keyword id="KW-0472">Membrane</keyword>
<keyword id="KW-0597">Phosphoprotein</keyword>
<keyword id="KW-1267">Proteomics identification</keyword>
<keyword id="KW-1185">Reference proteome</keyword>
<keyword id="KW-0812">Transmembrane</keyword>
<keyword id="KW-1133">Transmembrane helix</keyword>
<keyword id="KW-0813">Transport</keyword>
<organism>
    <name type="scientific">Homo sapiens</name>
    <name type="common">Human</name>
    <dbReference type="NCBI Taxonomy" id="9606"/>
    <lineage>
        <taxon>Eukaryota</taxon>
        <taxon>Metazoa</taxon>
        <taxon>Chordata</taxon>
        <taxon>Craniata</taxon>
        <taxon>Vertebrata</taxon>
        <taxon>Euteleostomi</taxon>
        <taxon>Mammalia</taxon>
        <taxon>Eutheria</taxon>
        <taxon>Euarchontoglires</taxon>
        <taxon>Primates</taxon>
        <taxon>Haplorrhini</taxon>
        <taxon>Catarrhini</taxon>
        <taxon>Hominidae</taxon>
        <taxon>Homo</taxon>
    </lineage>
</organism>